<protein>
    <recommendedName>
        <fullName evidence="1">Small ribosomal subunit protein uS3</fullName>
    </recommendedName>
    <alternativeName>
        <fullName evidence="2">30S ribosomal protein S3</fullName>
    </alternativeName>
</protein>
<dbReference type="EMBL" id="CP000300">
    <property type="protein sequence ID" value="ABE51031.1"/>
    <property type="molecule type" value="Genomic_DNA"/>
</dbReference>
<dbReference type="RefSeq" id="WP_011498195.1">
    <property type="nucleotide sequence ID" value="NC_007955.1"/>
</dbReference>
<dbReference type="SMR" id="Q12ZU5"/>
<dbReference type="STRING" id="259564.Mbur_0007"/>
<dbReference type="GeneID" id="3996907"/>
<dbReference type="KEGG" id="mbu:Mbur_0007"/>
<dbReference type="HOGENOM" id="CLU_058591_1_0_2"/>
<dbReference type="OrthoDB" id="9126at2157"/>
<dbReference type="Proteomes" id="UP000001979">
    <property type="component" value="Chromosome"/>
</dbReference>
<dbReference type="GO" id="GO:0022627">
    <property type="term" value="C:cytosolic small ribosomal subunit"/>
    <property type="evidence" value="ECO:0007669"/>
    <property type="project" value="TreeGrafter"/>
</dbReference>
<dbReference type="GO" id="GO:0019843">
    <property type="term" value="F:rRNA binding"/>
    <property type="evidence" value="ECO:0007669"/>
    <property type="project" value="UniProtKB-UniRule"/>
</dbReference>
<dbReference type="GO" id="GO:0003735">
    <property type="term" value="F:structural constituent of ribosome"/>
    <property type="evidence" value="ECO:0007669"/>
    <property type="project" value="InterPro"/>
</dbReference>
<dbReference type="GO" id="GO:0006412">
    <property type="term" value="P:translation"/>
    <property type="evidence" value="ECO:0007669"/>
    <property type="project" value="UniProtKB-UniRule"/>
</dbReference>
<dbReference type="CDD" id="cd02411">
    <property type="entry name" value="KH-II_30S_S3_arch"/>
    <property type="match status" value="1"/>
</dbReference>
<dbReference type="FunFam" id="3.30.300.20:FF:000001">
    <property type="entry name" value="30S ribosomal protein S3"/>
    <property type="match status" value="1"/>
</dbReference>
<dbReference type="Gene3D" id="3.30.300.20">
    <property type="match status" value="1"/>
</dbReference>
<dbReference type="Gene3D" id="3.30.1140.32">
    <property type="entry name" value="Ribosomal protein S3, C-terminal domain"/>
    <property type="match status" value="1"/>
</dbReference>
<dbReference type="HAMAP" id="MF_01309_A">
    <property type="entry name" value="Ribosomal_uS3_A"/>
    <property type="match status" value="1"/>
</dbReference>
<dbReference type="InterPro" id="IPR004087">
    <property type="entry name" value="KH_dom"/>
</dbReference>
<dbReference type="InterPro" id="IPR015946">
    <property type="entry name" value="KH_dom-like_a/b"/>
</dbReference>
<dbReference type="InterPro" id="IPR004044">
    <property type="entry name" value="KH_dom_type_2"/>
</dbReference>
<dbReference type="InterPro" id="IPR009019">
    <property type="entry name" value="KH_sf_prok-type"/>
</dbReference>
<dbReference type="InterPro" id="IPR036419">
    <property type="entry name" value="Ribosomal_S3_C_sf"/>
</dbReference>
<dbReference type="InterPro" id="IPR027488">
    <property type="entry name" value="Ribosomal_uS3_arc"/>
</dbReference>
<dbReference type="InterPro" id="IPR001351">
    <property type="entry name" value="Ribosomal_uS3_C"/>
</dbReference>
<dbReference type="InterPro" id="IPR005703">
    <property type="entry name" value="Ribosomal_uS3_euk/arc"/>
</dbReference>
<dbReference type="NCBIfam" id="NF003219">
    <property type="entry name" value="PRK04191.1"/>
    <property type="match status" value="1"/>
</dbReference>
<dbReference type="NCBIfam" id="TIGR01008">
    <property type="entry name" value="uS3_euk_arch"/>
    <property type="match status" value="1"/>
</dbReference>
<dbReference type="PANTHER" id="PTHR11760">
    <property type="entry name" value="30S/40S RIBOSOMAL PROTEIN S3"/>
    <property type="match status" value="1"/>
</dbReference>
<dbReference type="PANTHER" id="PTHR11760:SF32">
    <property type="entry name" value="SMALL RIBOSOMAL SUBUNIT PROTEIN US3"/>
    <property type="match status" value="1"/>
</dbReference>
<dbReference type="Pfam" id="PF07650">
    <property type="entry name" value="KH_2"/>
    <property type="match status" value="1"/>
</dbReference>
<dbReference type="Pfam" id="PF00189">
    <property type="entry name" value="Ribosomal_S3_C"/>
    <property type="match status" value="1"/>
</dbReference>
<dbReference type="SMART" id="SM00322">
    <property type="entry name" value="KH"/>
    <property type="match status" value="1"/>
</dbReference>
<dbReference type="SUPFAM" id="SSF54814">
    <property type="entry name" value="Prokaryotic type KH domain (KH-domain type II)"/>
    <property type="match status" value="1"/>
</dbReference>
<dbReference type="SUPFAM" id="SSF54821">
    <property type="entry name" value="Ribosomal protein S3 C-terminal domain"/>
    <property type="match status" value="1"/>
</dbReference>
<dbReference type="PROSITE" id="PS50823">
    <property type="entry name" value="KH_TYPE_2"/>
    <property type="match status" value="1"/>
</dbReference>
<sequence>MAVEKKFVQDGYVKASMDEYFAKQLSRAGYGGMDINRTPMGTQITVYAEKPGMVIGKAGKVIRKLTRDVDRLYDLDNPQIDAQEVKRPELNAQMMASRLASSIERGWYFRKAGHNTMRAVMNAGALGCEIVISGKLTGSRSRVEKMVNGYIKHAGKPVDDIVDDGFATAVKKLGTLGCKVRIIHPDAVLPDSYRLKNAEELGSLVSTPVEEEKSAGIEELVEVEAKGEVAEAEEAVVEETAKAEAETVEETVEEVAASEVEADMITGESVTEEGEERREVNGVWQHKHGGHDYWHPTGRMHRES</sequence>
<feature type="chain" id="PRO_0000293922" description="Small ribosomal subunit protein uS3">
    <location>
        <begin position="1"/>
        <end position="304"/>
    </location>
</feature>
<feature type="domain" description="KH type-2" evidence="1">
    <location>
        <begin position="17"/>
        <end position="86"/>
    </location>
</feature>
<organism>
    <name type="scientific">Methanococcoides burtonii (strain DSM 6242 / NBRC 107633 / OCM 468 / ACE-M)</name>
    <dbReference type="NCBI Taxonomy" id="259564"/>
    <lineage>
        <taxon>Archaea</taxon>
        <taxon>Methanobacteriati</taxon>
        <taxon>Methanobacteriota</taxon>
        <taxon>Stenosarchaea group</taxon>
        <taxon>Methanomicrobia</taxon>
        <taxon>Methanosarcinales</taxon>
        <taxon>Methanosarcinaceae</taxon>
        <taxon>Methanococcoides</taxon>
    </lineage>
</organism>
<keyword id="KW-0687">Ribonucleoprotein</keyword>
<keyword id="KW-0689">Ribosomal protein</keyword>
<keyword id="KW-0694">RNA-binding</keyword>
<keyword id="KW-0699">rRNA-binding</keyword>
<reference key="1">
    <citation type="journal article" date="2009" name="ISME J.">
        <title>The genome sequence of the psychrophilic archaeon, Methanococcoides burtonii: the role of genome evolution in cold adaptation.</title>
        <authorList>
            <person name="Allen M.A."/>
            <person name="Lauro F.M."/>
            <person name="Williams T.J."/>
            <person name="Burg D."/>
            <person name="Siddiqui K.S."/>
            <person name="De Francisci D."/>
            <person name="Chong K.W."/>
            <person name="Pilak O."/>
            <person name="Chew H.H."/>
            <person name="De Maere M.Z."/>
            <person name="Ting L."/>
            <person name="Katrib M."/>
            <person name="Ng C."/>
            <person name="Sowers K.R."/>
            <person name="Galperin M.Y."/>
            <person name="Anderson I.J."/>
            <person name="Ivanova N."/>
            <person name="Dalin E."/>
            <person name="Martinez M."/>
            <person name="Lapidus A."/>
            <person name="Hauser L."/>
            <person name="Land M."/>
            <person name="Thomas T."/>
            <person name="Cavicchioli R."/>
        </authorList>
    </citation>
    <scope>NUCLEOTIDE SEQUENCE [LARGE SCALE GENOMIC DNA]</scope>
    <source>
        <strain>DSM 6242 / NBRC 107633 / OCM 468 / ACE-M</strain>
    </source>
</reference>
<proteinExistence type="inferred from homology"/>
<comment type="function">
    <text evidence="1">Binds the lower part of the 30S subunit head.</text>
</comment>
<comment type="subunit">
    <text evidence="1">Part of the 30S ribosomal subunit.</text>
</comment>
<comment type="similarity">
    <text evidence="1">Belongs to the universal ribosomal protein uS3 family.</text>
</comment>
<gene>
    <name evidence="1" type="primary">rps3</name>
    <name type="ordered locus">Mbur_0007</name>
</gene>
<evidence type="ECO:0000255" key="1">
    <source>
        <dbReference type="HAMAP-Rule" id="MF_01309"/>
    </source>
</evidence>
<evidence type="ECO:0000305" key="2"/>
<accession>Q12ZU5</accession>
<name>RS3_METBU</name>